<gene>
    <name type="primary">GP</name>
</gene>
<proteinExistence type="inferred from homology"/>
<comment type="subcellular location">
    <subcellularLocation>
        <location evidence="3">Secreted</location>
    </subcellularLocation>
</comment>
<comment type="RNA editing">
    <location>
        <position position="296"/>
    </location>
    <text>Partially edited. RNA editing at this position consists of an insertion of one or two adenine nucleotides. The sequence displayed here is the super small secreted glycoprotein ssGP, derived from the +2A edited RNA. The unedited RNA gives rise to the small secreted glycoprotein sGP (AC Q91DD7), the +1A edited RNA gives rise to the full-length transmembrane glycoprotein GP (AC Q91DD8).</text>
</comment>
<comment type="similarity">
    <text evidence="3">Belongs to the filoviruses glycoprotein family.</text>
</comment>
<organismHost>
    <name type="scientific">Homo sapiens</name>
    <name type="common">Human</name>
    <dbReference type="NCBI Taxonomy" id="9606"/>
</organismHost>
<organismHost>
    <name type="scientific">Macaca fascicularis</name>
    <name type="common">Crab-eating macaque</name>
    <name type="synonym">Cynomolgus monkey</name>
    <dbReference type="NCBI Taxonomy" id="9541"/>
</organismHost>
<organismHost>
    <name type="scientific">Pteropodinae</name>
    <dbReference type="NCBI Taxonomy" id="77225"/>
</organismHost>
<organismHost>
    <name type="scientific">Sus scrofa</name>
    <name type="common">Pig</name>
    <dbReference type="NCBI Taxonomy" id="9823"/>
</organismHost>
<evidence type="ECO:0000250" key="1"/>
<evidence type="ECO:0000255" key="2"/>
<evidence type="ECO:0000305" key="3"/>
<accession>P0C770</accession>
<name>VSSGP_EBORE</name>
<protein>
    <recommendedName>
        <fullName>Super small secreted glycoprotein</fullName>
        <shortName>SsGP</shortName>
    </recommendedName>
</protein>
<feature type="signal peptide" evidence="2">
    <location>
        <begin position="1"/>
        <end position="33"/>
    </location>
</feature>
<feature type="chain" id="PRO_0000391495" description="Super small secreted glycoprotein">
    <location>
        <begin position="34"/>
        <end position="332"/>
    </location>
</feature>
<feature type="glycosylation site" description="N-linked (GlcNAc...) asparagine; by host" evidence="2">
    <location>
        <position position="41"/>
    </location>
</feature>
<feature type="glycosylation site" description="N-linked (GlcNAc...) asparagine; by host" evidence="2">
    <location>
        <position position="205"/>
    </location>
</feature>
<feature type="glycosylation site" description="N-linked (GlcNAc...) asparagine; by host" evidence="2">
    <location>
        <position position="239"/>
    </location>
</feature>
<feature type="glycosylation site" description="N-linked (GlcNAc...) asparagine; by host" evidence="2">
    <location>
        <position position="258"/>
    </location>
</feature>
<feature type="glycosylation site" description="N-linked (GlcNAc...) asparagine; by host" evidence="2">
    <location>
        <position position="269"/>
    </location>
</feature>
<feature type="disulfide bond" description="Interchain" evidence="1">
    <location>
        <position position="54"/>
    </location>
</feature>
<feature type="disulfide bond" evidence="1">
    <location>
        <begin position="109"/>
        <end position="136"/>
    </location>
</feature>
<feature type="disulfide bond" evidence="1">
    <location>
        <begin position="122"/>
        <end position="148"/>
    </location>
</feature>
<sequence length="332" mass="37496">MGSGYQLLQLPRERFRKTSFLVWVIILFQRAISMPLGIVTNSTLKATEIDQLVCRDKLSSTSQLKSVGLNLEGNGIATDVPSATKRWGFRSGVPPKVVSYEAGEWAENCYNLEIKKSDGSECLPLPPDGVRGFPRCRYVHKVQGTGPCPGDLAFHKNGAFFLYDRLASTVIYRGTTFAEGVIAFLILSEPKKHFWKATPAHEPVNTTDDSTSYYMTLTLSYEMSNFGGEESNTLFKVDNHTYVQLDRPHTPQFLVQLNETLRRNNRLSNSTGRLTWTVDPKIEPDVGEWAFWETKKKLFPTTSWRKLAFPNSINPHQQLLRSEPGGNCPRKN</sequence>
<organism>
    <name type="scientific">Reston ebolavirus (strain Philippines-96)</name>
    <name type="common">REBOV</name>
    <name type="synonym">Reston Ebola virus</name>
    <dbReference type="NCBI Taxonomy" id="129003"/>
    <lineage>
        <taxon>Viruses</taxon>
        <taxon>Riboviria</taxon>
        <taxon>Orthornavirae</taxon>
        <taxon>Negarnaviricota</taxon>
        <taxon>Haploviricotina</taxon>
        <taxon>Monjiviricetes</taxon>
        <taxon>Mononegavirales</taxon>
        <taxon>Filoviridae</taxon>
        <taxon>Orthoebolavirus</taxon>
        <taxon>Orthoebolavirus restonense</taxon>
        <taxon>Reston ebolavirus</taxon>
    </lineage>
</organism>
<dbReference type="EMBL" id="AB050936">
    <property type="status" value="NOT_ANNOTATED_CDS"/>
    <property type="molecule type" value="Genomic_RNA"/>
</dbReference>
<dbReference type="SMR" id="P0C770"/>
<dbReference type="GlyCosmos" id="P0C770">
    <property type="glycosylation" value="5 sites, No reported glycans"/>
</dbReference>
<dbReference type="Proteomes" id="UP000002322">
    <property type="component" value="Genome"/>
</dbReference>
<dbReference type="GO" id="GO:0005576">
    <property type="term" value="C:extracellular region"/>
    <property type="evidence" value="ECO:0007669"/>
    <property type="project" value="UniProtKB-SubCell"/>
</dbReference>
<dbReference type="InterPro" id="IPR014625">
    <property type="entry name" value="GPC_FiloV"/>
</dbReference>
<dbReference type="InterPro" id="IPR002561">
    <property type="entry name" value="GPC_filovir-type_extra_dom"/>
</dbReference>
<dbReference type="Pfam" id="PF01611">
    <property type="entry name" value="Filo_glycop"/>
    <property type="match status" value="1"/>
</dbReference>
<dbReference type="PIRSF" id="PIRSF036874">
    <property type="entry name" value="GPC_FiloV"/>
    <property type="match status" value="1"/>
</dbReference>
<keyword id="KW-1015">Disulfide bond</keyword>
<keyword id="KW-0325">Glycoprotein</keyword>
<keyword id="KW-0691">RNA editing</keyword>
<keyword id="KW-0964">Secreted</keyword>
<keyword id="KW-0732">Signal</keyword>
<reference key="1">
    <citation type="journal article" date="2001" name="Arch. Virol.">
        <title>Genome structure of Ebola virus subtype Reston: differences among Ebola subtypes.</title>
        <authorList>
            <person name="Ikegami T."/>
            <person name="Calaor A.B."/>
            <person name="Miranda M.E."/>
            <person name="Niikura M."/>
            <person name="Saijo M."/>
            <person name="Kurane I."/>
            <person name="Yoshikawa Y."/>
            <person name="Morikawa S."/>
        </authorList>
    </citation>
    <scope>NUCLEOTIDE SEQUENCE [GENOMIC RNA]</scope>
</reference>